<evidence type="ECO:0000250" key="1">
    <source>
        <dbReference type="UniProtKB" id="P45446"/>
    </source>
</evidence>
<evidence type="ECO:0000250" key="2">
    <source>
        <dbReference type="UniProtKB" id="Q8R1B8"/>
    </source>
</evidence>
<evidence type="ECO:0000255" key="3">
    <source>
        <dbReference type="PROSITE-ProRule" id="PRU00407"/>
    </source>
</evidence>
<evidence type="ECO:0000255" key="4">
    <source>
        <dbReference type="PROSITE-ProRule" id="PRU01189"/>
    </source>
</evidence>
<evidence type="ECO:0000256" key="5">
    <source>
        <dbReference type="SAM" id="MobiDB-lite"/>
    </source>
</evidence>
<evidence type="ECO:0000269" key="6">
    <source>
    </source>
</evidence>
<evidence type="ECO:0000303" key="7">
    <source ref="1"/>
</evidence>
<evidence type="ECO:0000305" key="8"/>
<sequence length="470" mass="53220">MCENQLKTKADATAQIEVIPCKICGDKSSGIHYGVITCEGCKGFFRRSQQNNASYSCPRQRNCLIDRTNRNRCQHCRLQKCLALGMSRDAVKFGRMSKKQRDSLYAEVQKHQQRLQEQRQQQSGEAEALARVYSSSISNGLSNLNNETSGTYANGHVIDLPKSEGYYNVDSGQPSPDQSGLDMTGIKQIKQEPIYDLTSVPNLFTYSSFNNGQLAPGITMTEIDRIAQNIIKSHLETCQYTMEELHQLAWQTHTYEEIKAYQSKSREALWQQCAIQITHAIQYVVEFAKRITGFMELCQNDQILLLKSGCLEVVLVRMCRAFNPLNNTVLFEGKYGGMQMFKALGSDDLVNEAFDFAKNLCSLQLTEEEIALFSSAVLISPDRAWLIEPRKVQKLQEKIYFALQHVIQKNHLDDETLAKLIAKIPTITAVCNLHGEKLQVFKQSHPEIVNTLFPPLYKELFNPDCATGCK</sequence>
<dbReference type="EMBL" id="Y08639">
    <property type="protein sequence ID" value="CAA69929.1"/>
    <property type="molecule type" value="mRNA"/>
</dbReference>
<dbReference type="EMBL" id="BX647070">
    <property type="status" value="NOT_ANNOTATED_CDS"/>
    <property type="molecule type" value="mRNA"/>
</dbReference>
<dbReference type="EMBL" id="AL137018">
    <property type="status" value="NOT_ANNOTATED_CDS"/>
    <property type="molecule type" value="Genomic_DNA"/>
</dbReference>
<dbReference type="CCDS" id="CCDS6646.1">
    <molecule id="Q92753-1"/>
</dbReference>
<dbReference type="CCDS" id="CCDS94422.1">
    <molecule id="Q92753-2"/>
</dbReference>
<dbReference type="RefSeq" id="NP_001351952.1">
    <molecule id="Q92753-2"/>
    <property type="nucleotide sequence ID" value="NM_001365023.1"/>
</dbReference>
<dbReference type="SMR" id="Q92753"/>
<dbReference type="FunCoup" id="Q92753">
    <property type="interactions" value="1663"/>
</dbReference>
<dbReference type="IntAct" id="Q92753">
    <property type="interactions" value="21"/>
</dbReference>
<dbReference type="STRING" id="9606.ENSP00000366093"/>
<dbReference type="BindingDB" id="Q92753"/>
<dbReference type="ChEMBL" id="CHEMBL3091268"/>
<dbReference type="DrugBank" id="DB01065">
    <property type="generic name" value="Melatonin"/>
</dbReference>
<dbReference type="DrugCentral" id="Q92753"/>
<dbReference type="GuidetoPHARMACOLOGY" id="599"/>
<dbReference type="GlyGen" id="Q92753">
    <property type="glycosylation" value="1 site, 1 O-linked glycan (1 site)"/>
</dbReference>
<dbReference type="iPTMnet" id="Q92753"/>
<dbReference type="PhosphoSitePlus" id="Q92753"/>
<dbReference type="BioMuta" id="RORB"/>
<dbReference type="DMDM" id="124028630"/>
<dbReference type="MassIVE" id="Q92753"/>
<dbReference type="PaxDb" id="9606-ENSP00000366093"/>
<dbReference type="PeptideAtlas" id="Q92753"/>
<dbReference type="ProteomicsDB" id="75444">
    <molecule id="Q92753-2"/>
</dbReference>
<dbReference type="ProteomicsDB" id="75445">
    <molecule id="Q92753-1"/>
</dbReference>
<dbReference type="Antibodypedia" id="1699">
    <property type="antibodies" value="419 antibodies from 32 providers"/>
</dbReference>
<dbReference type="DNASU" id="6096"/>
<dbReference type="Ensembl" id="ENST00000376896.8">
    <molecule id="Q92753-1"/>
    <property type="protein sequence ID" value="ENSP00000366093.2"/>
    <property type="gene ID" value="ENSG00000198963.11"/>
</dbReference>
<dbReference type="Ensembl" id="ENST00000396204.2">
    <molecule id="Q92753-2"/>
    <property type="protein sequence ID" value="ENSP00000379507.2"/>
    <property type="gene ID" value="ENSG00000198963.11"/>
</dbReference>
<dbReference type="GeneID" id="6096"/>
<dbReference type="MANE-Select" id="ENST00000376896.8">
    <molecule id="Q92753-1"/>
    <property type="protein sequence ID" value="ENSP00000366093.2"/>
    <property type="RefSeq nucleotide sequence ID" value="NM_006914.4"/>
    <property type="RefSeq protein sequence ID" value="NP_008845.2"/>
</dbReference>
<dbReference type="UCSC" id="uc004ajh.4">
    <molecule id="Q92753-2"/>
    <property type="organism name" value="human"/>
</dbReference>
<dbReference type="AGR" id="HGNC:10259"/>
<dbReference type="GeneCards" id="RORB"/>
<dbReference type="HGNC" id="HGNC:10259">
    <property type="gene designation" value="RORB"/>
</dbReference>
<dbReference type="HPA" id="ENSG00000198963">
    <property type="expression patterns" value="Tissue enriched (retina)"/>
</dbReference>
<dbReference type="MalaCards" id="RORB"/>
<dbReference type="MIM" id="601972">
    <property type="type" value="gene"/>
</dbReference>
<dbReference type="MIM" id="618357">
    <property type="type" value="phenotype"/>
</dbReference>
<dbReference type="neXtProt" id="NX_Q92753"/>
<dbReference type="OpenTargets" id="ENSG00000198963"/>
<dbReference type="PharmGKB" id="PA34631"/>
<dbReference type="VEuPathDB" id="HostDB:ENSG00000198963"/>
<dbReference type="eggNOG" id="KOG4216">
    <property type="taxonomic scope" value="Eukaryota"/>
</dbReference>
<dbReference type="GeneTree" id="ENSGT00940000157708"/>
<dbReference type="HOGENOM" id="CLU_007368_2_0_1"/>
<dbReference type="InParanoid" id="Q92753"/>
<dbReference type="OMA" id="TIACKIC"/>
<dbReference type="OrthoDB" id="8832025at2759"/>
<dbReference type="PAN-GO" id="Q92753">
    <property type="GO annotations" value="5 GO annotations based on evolutionary models"/>
</dbReference>
<dbReference type="PhylomeDB" id="Q92753"/>
<dbReference type="TreeFam" id="TF319910"/>
<dbReference type="PathwayCommons" id="Q92753"/>
<dbReference type="Reactome" id="R-HSA-383280">
    <property type="pathway name" value="Nuclear Receptor transcription pathway"/>
</dbReference>
<dbReference type="SignaLink" id="Q92753"/>
<dbReference type="SIGNOR" id="Q92753"/>
<dbReference type="ChiTaRS" id="RORB">
    <property type="organism name" value="human"/>
</dbReference>
<dbReference type="Pharos" id="Q92753">
    <property type="development level" value="Tchem"/>
</dbReference>
<dbReference type="PRO" id="PR:Q92753"/>
<dbReference type="Proteomes" id="UP000005640">
    <property type="component" value="Chromosome 9"/>
</dbReference>
<dbReference type="RNAct" id="Q92753">
    <property type="molecule type" value="protein"/>
</dbReference>
<dbReference type="Bgee" id="ENSG00000198963">
    <property type="expression patterns" value="Expressed in endothelial cell and 149 other cell types or tissues"/>
</dbReference>
<dbReference type="ExpressionAtlas" id="Q92753">
    <property type="expression patterns" value="baseline and differential"/>
</dbReference>
<dbReference type="GO" id="GO:0000785">
    <property type="term" value="C:chromatin"/>
    <property type="evidence" value="ECO:0000247"/>
    <property type="project" value="NTNU_SB"/>
</dbReference>
<dbReference type="GO" id="GO:0005654">
    <property type="term" value="C:nucleoplasm"/>
    <property type="evidence" value="ECO:0000314"/>
    <property type="project" value="UniProtKB"/>
</dbReference>
<dbReference type="GO" id="GO:0005634">
    <property type="term" value="C:nucleus"/>
    <property type="evidence" value="ECO:0000250"/>
    <property type="project" value="UniProtKB"/>
</dbReference>
<dbReference type="GO" id="GO:0001228">
    <property type="term" value="F:DNA-binding transcription activator activity, RNA polymerase II-specific"/>
    <property type="evidence" value="ECO:0007669"/>
    <property type="project" value="Ensembl"/>
</dbReference>
<dbReference type="GO" id="GO:0003700">
    <property type="term" value="F:DNA-binding transcription factor activity"/>
    <property type="evidence" value="ECO:0000250"/>
    <property type="project" value="UniProtKB"/>
</dbReference>
<dbReference type="GO" id="GO:0000981">
    <property type="term" value="F:DNA-binding transcription factor activity, RNA polymerase II-specific"/>
    <property type="evidence" value="ECO:0000250"/>
    <property type="project" value="UniProtKB"/>
</dbReference>
<dbReference type="GO" id="GO:0008502">
    <property type="term" value="F:melatonin receptor activity"/>
    <property type="evidence" value="ECO:0000318"/>
    <property type="project" value="GO_Central"/>
</dbReference>
<dbReference type="GO" id="GO:0004879">
    <property type="term" value="F:nuclear receptor activity"/>
    <property type="evidence" value="ECO:0000318"/>
    <property type="project" value="GO_Central"/>
</dbReference>
<dbReference type="GO" id="GO:0000978">
    <property type="term" value="F:RNA polymerase II cis-regulatory region sequence-specific DNA binding"/>
    <property type="evidence" value="ECO:0000318"/>
    <property type="project" value="GO_Central"/>
</dbReference>
<dbReference type="GO" id="GO:1990837">
    <property type="term" value="F:sequence-specific double-stranded DNA binding"/>
    <property type="evidence" value="ECO:0000314"/>
    <property type="project" value="ARUK-UCL"/>
</dbReference>
<dbReference type="GO" id="GO:0008270">
    <property type="term" value="F:zinc ion binding"/>
    <property type="evidence" value="ECO:0007669"/>
    <property type="project" value="UniProtKB-KW"/>
</dbReference>
<dbReference type="GO" id="GO:0035881">
    <property type="term" value="P:amacrine cell differentiation"/>
    <property type="evidence" value="ECO:0000250"/>
    <property type="project" value="UniProtKB"/>
</dbReference>
<dbReference type="GO" id="GO:0071300">
    <property type="term" value="P:cellular response to retinoic acid"/>
    <property type="evidence" value="ECO:0000250"/>
    <property type="project" value="UniProtKB"/>
</dbReference>
<dbReference type="GO" id="GO:0042462">
    <property type="term" value="P:eye photoreceptor cell development"/>
    <property type="evidence" value="ECO:0000250"/>
    <property type="project" value="UniProtKB"/>
</dbReference>
<dbReference type="GO" id="GO:0045892">
    <property type="term" value="P:negative regulation of DNA-templated transcription"/>
    <property type="evidence" value="ECO:0000250"/>
    <property type="project" value="UniProtKB"/>
</dbReference>
<dbReference type="GO" id="GO:0045668">
    <property type="term" value="P:negative regulation of osteoblast differentiation"/>
    <property type="evidence" value="ECO:0000250"/>
    <property type="project" value="UniProtKB"/>
</dbReference>
<dbReference type="GO" id="GO:0045893">
    <property type="term" value="P:positive regulation of DNA-templated transcription"/>
    <property type="evidence" value="ECO:0000250"/>
    <property type="project" value="UniProtKB"/>
</dbReference>
<dbReference type="GO" id="GO:0045944">
    <property type="term" value="P:positive regulation of transcription by RNA polymerase II"/>
    <property type="evidence" value="ECO:0000250"/>
    <property type="project" value="UniProtKB"/>
</dbReference>
<dbReference type="GO" id="GO:0042752">
    <property type="term" value="P:regulation of circadian rhythm"/>
    <property type="evidence" value="ECO:0000250"/>
    <property type="project" value="UniProtKB"/>
</dbReference>
<dbReference type="GO" id="GO:0006355">
    <property type="term" value="P:regulation of DNA-templated transcription"/>
    <property type="evidence" value="ECO:0000304"/>
    <property type="project" value="ProtInc"/>
</dbReference>
<dbReference type="GO" id="GO:0006357">
    <property type="term" value="P:regulation of transcription by RNA polymerase II"/>
    <property type="evidence" value="ECO:0000318"/>
    <property type="project" value="GO_Central"/>
</dbReference>
<dbReference type="GO" id="GO:0060041">
    <property type="term" value="P:retina development in camera-type eye"/>
    <property type="evidence" value="ECO:0000250"/>
    <property type="project" value="UniProtKB"/>
</dbReference>
<dbReference type="GO" id="GO:0046549">
    <property type="term" value="P:retinal cone cell development"/>
    <property type="evidence" value="ECO:0000250"/>
    <property type="project" value="UniProtKB"/>
</dbReference>
<dbReference type="GO" id="GO:0046548">
    <property type="term" value="P:retinal rod cell development"/>
    <property type="evidence" value="ECO:0000250"/>
    <property type="project" value="UniProtKB"/>
</dbReference>
<dbReference type="GO" id="GO:0048511">
    <property type="term" value="P:rhythmic process"/>
    <property type="evidence" value="ECO:0007669"/>
    <property type="project" value="UniProtKB-KW"/>
</dbReference>
<dbReference type="GO" id="GO:0007601">
    <property type="term" value="P:visual perception"/>
    <property type="evidence" value="ECO:0007669"/>
    <property type="project" value="UniProtKB-KW"/>
</dbReference>
<dbReference type="CDD" id="cd06968">
    <property type="entry name" value="NR_DBD_ROR"/>
    <property type="match status" value="1"/>
</dbReference>
<dbReference type="CDD" id="cd06939">
    <property type="entry name" value="NR_LBD_ROR_like"/>
    <property type="match status" value="1"/>
</dbReference>
<dbReference type="FunFam" id="1.10.565.10:FF:000005">
    <property type="entry name" value="Nuclear orphan receptor ROR-beta"/>
    <property type="match status" value="1"/>
</dbReference>
<dbReference type="FunFam" id="3.30.50.10:FF:000003">
    <property type="entry name" value="Nuclear orphan receptor ROR-beta"/>
    <property type="match status" value="1"/>
</dbReference>
<dbReference type="Gene3D" id="3.30.50.10">
    <property type="entry name" value="Erythroid Transcription Factor GATA-1, subunit A"/>
    <property type="match status" value="1"/>
</dbReference>
<dbReference type="Gene3D" id="1.10.565.10">
    <property type="entry name" value="Retinoid X Receptor"/>
    <property type="match status" value="1"/>
</dbReference>
<dbReference type="InterPro" id="IPR035500">
    <property type="entry name" value="NHR-like_dom_sf"/>
</dbReference>
<dbReference type="InterPro" id="IPR044101">
    <property type="entry name" value="NR_DBD_ROR"/>
</dbReference>
<dbReference type="InterPro" id="IPR000536">
    <property type="entry name" value="Nucl_hrmn_rcpt_lig-bd"/>
</dbReference>
<dbReference type="InterPro" id="IPR001723">
    <property type="entry name" value="Nuclear_hrmn_rcpt"/>
</dbReference>
<dbReference type="InterPro" id="IPR003079">
    <property type="entry name" value="ROR_rcpt"/>
</dbReference>
<dbReference type="InterPro" id="IPR001628">
    <property type="entry name" value="Znf_hrmn_rcpt"/>
</dbReference>
<dbReference type="InterPro" id="IPR013088">
    <property type="entry name" value="Znf_NHR/GATA"/>
</dbReference>
<dbReference type="PANTHER" id="PTHR45805">
    <property type="entry name" value="NUCLEAR HORMONE RECEPTOR HR3-RELATED"/>
    <property type="match status" value="1"/>
</dbReference>
<dbReference type="PANTHER" id="PTHR45805:SF6">
    <property type="entry name" value="NUCLEAR RECEPTOR ROR-BETA"/>
    <property type="match status" value="1"/>
</dbReference>
<dbReference type="Pfam" id="PF00104">
    <property type="entry name" value="Hormone_recep"/>
    <property type="match status" value="1"/>
</dbReference>
<dbReference type="Pfam" id="PF00105">
    <property type="entry name" value="zf-C4"/>
    <property type="match status" value="1"/>
</dbReference>
<dbReference type="PRINTS" id="PR01293">
    <property type="entry name" value="RORNUCRECPTR"/>
</dbReference>
<dbReference type="PRINTS" id="PR00398">
    <property type="entry name" value="STRDHORMONER"/>
</dbReference>
<dbReference type="PRINTS" id="PR00047">
    <property type="entry name" value="STROIDFINGER"/>
</dbReference>
<dbReference type="SMART" id="SM00430">
    <property type="entry name" value="HOLI"/>
    <property type="match status" value="1"/>
</dbReference>
<dbReference type="SMART" id="SM00399">
    <property type="entry name" value="ZnF_C4"/>
    <property type="match status" value="1"/>
</dbReference>
<dbReference type="SUPFAM" id="SSF57716">
    <property type="entry name" value="Glucocorticoid receptor-like (DNA-binding domain)"/>
    <property type="match status" value="1"/>
</dbReference>
<dbReference type="SUPFAM" id="SSF48508">
    <property type="entry name" value="Nuclear receptor ligand-binding domain"/>
    <property type="match status" value="1"/>
</dbReference>
<dbReference type="PROSITE" id="PS51843">
    <property type="entry name" value="NR_LBD"/>
    <property type="match status" value="1"/>
</dbReference>
<dbReference type="PROSITE" id="PS00031">
    <property type="entry name" value="NUCLEAR_REC_DBD_1"/>
    <property type="match status" value="1"/>
</dbReference>
<dbReference type="PROSITE" id="PS51030">
    <property type="entry name" value="NUCLEAR_REC_DBD_2"/>
    <property type="match status" value="1"/>
</dbReference>
<reference key="1">
    <citation type="submission" date="1996-10" db="EMBL/GenBank/DDBJ databases">
        <authorList>
            <person name="Becker-Andre M."/>
        </authorList>
    </citation>
    <scope>NUCLEOTIDE SEQUENCE [MRNA] (ISOFORM 1)</scope>
    <source>
        <tissue>Retina</tissue>
    </source>
</reference>
<reference key="2">
    <citation type="journal article" date="2007" name="BMC Genomics">
        <title>The full-ORF clone resource of the German cDNA consortium.</title>
        <authorList>
            <person name="Bechtel S."/>
            <person name="Rosenfelder H."/>
            <person name="Duda A."/>
            <person name="Schmidt C.P."/>
            <person name="Ernst U."/>
            <person name="Wellenreuther R."/>
            <person name="Mehrle A."/>
            <person name="Schuster C."/>
            <person name="Bahr A."/>
            <person name="Bloecker H."/>
            <person name="Heubner D."/>
            <person name="Hoerlein A."/>
            <person name="Michel G."/>
            <person name="Wedler H."/>
            <person name="Koehrer K."/>
            <person name="Ottenwaelder B."/>
            <person name="Poustka A."/>
            <person name="Wiemann S."/>
            <person name="Schupp I."/>
        </authorList>
    </citation>
    <scope>NUCLEOTIDE SEQUENCE [LARGE SCALE MRNA] (ISOFORM 2)</scope>
    <source>
        <tissue>Retina</tissue>
    </source>
</reference>
<reference key="3">
    <citation type="journal article" date="2004" name="Nature">
        <title>DNA sequence and analysis of human chromosome 9.</title>
        <authorList>
            <person name="Humphray S.J."/>
            <person name="Oliver K."/>
            <person name="Hunt A.R."/>
            <person name="Plumb R.W."/>
            <person name="Loveland J.E."/>
            <person name="Howe K.L."/>
            <person name="Andrews T.D."/>
            <person name="Searle S."/>
            <person name="Hunt S.E."/>
            <person name="Scott C.E."/>
            <person name="Jones M.C."/>
            <person name="Ainscough R."/>
            <person name="Almeida J.P."/>
            <person name="Ambrose K.D."/>
            <person name="Ashwell R.I.S."/>
            <person name="Babbage A.K."/>
            <person name="Babbage S."/>
            <person name="Bagguley C.L."/>
            <person name="Bailey J."/>
            <person name="Banerjee R."/>
            <person name="Barker D.J."/>
            <person name="Barlow K.F."/>
            <person name="Bates K."/>
            <person name="Beasley H."/>
            <person name="Beasley O."/>
            <person name="Bird C.P."/>
            <person name="Bray-Allen S."/>
            <person name="Brown A.J."/>
            <person name="Brown J.Y."/>
            <person name="Burford D."/>
            <person name="Burrill W."/>
            <person name="Burton J."/>
            <person name="Carder C."/>
            <person name="Carter N.P."/>
            <person name="Chapman J.C."/>
            <person name="Chen Y."/>
            <person name="Clarke G."/>
            <person name="Clark S.Y."/>
            <person name="Clee C.M."/>
            <person name="Clegg S."/>
            <person name="Collier R.E."/>
            <person name="Corby N."/>
            <person name="Crosier M."/>
            <person name="Cummings A.T."/>
            <person name="Davies J."/>
            <person name="Dhami P."/>
            <person name="Dunn M."/>
            <person name="Dutta I."/>
            <person name="Dyer L.W."/>
            <person name="Earthrowl M.E."/>
            <person name="Faulkner L."/>
            <person name="Fleming C.J."/>
            <person name="Frankish A."/>
            <person name="Frankland J.A."/>
            <person name="French L."/>
            <person name="Fricker D.G."/>
            <person name="Garner P."/>
            <person name="Garnett J."/>
            <person name="Ghori J."/>
            <person name="Gilbert J.G.R."/>
            <person name="Glison C."/>
            <person name="Grafham D.V."/>
            <person name="Gribble S."/>
            <person name="Griffiths C."/>
            <person name="Griffiths-Jones S."/>
            <person name="Grocock R."/>
            <person name="Guy J."/>
            <person name="Hall R.E."/>
            <person name="Hammond S."/>
            <person name="Harley J.L."/>
            <person name="Harrison E.S.I."/>
            <person name="Hart E.A."/>
            <person name="Heath P.D."/>
            <person name="Henderson C.D."/>
            <person name="Hopkins B.L."/>
            <person name="Howard P.J."/>
            <person name="Howden P.J."/>
            <person name="Huckle E."/>
            <person name="Johnson C."/>
            <person name="Johnson D."/>
            <person name="Joy A.A."/>
            <person name="Kay M."/>
            <person name="Keenan S."/>
            <person name="Kershaw J.K."/>
            <person name="Kimberley A.M."/>
            <person name="King A."/>
            <person name="Knights A."/>
            <person name="Laird G.K."/>
            <person name="Langford C."/>
            <person name="Lawlor S."/>
            <person name="Leongamornlert D.A."/>
            <person name="Leversha M."/>
            <person name="Lloyd C."/>
            <person name="Lloyd D.M."/>
            <person name="Lovell J."/>
            <person name="Martin S."/>
            <person name="Mashreghi-Mohammadi M."/>
            <person name="Matthews L."/>
            <person name="McLaren S."/>
            <person name="McLay K.E."/>
            <person name="McMurray A."/>
            <person name="Milne S."/>
            <person name="Nickerson T."/>
            <person name="Nisbett J."/>
            <person name="Nordsiek G."/>
            <person name="Pearce A.V."/>
            <person name="Peck A.I."/>
            <person name="Porter K.M."/>
            <person name="Pandian R."/>
            <person name="Pelan S."/>
            <person name="Phillimore B."/>
            <person name="Povey S."/>
            <person name="Ramsey Y."/>
            <person name="Rand V."/>
            <person name="Scharfe M."/>
            <person name="Sehra H.K."/>
            <person name="Shownkeen R."/>
            <person name="Sims S.K."/>
            <person name="Skuce C.D."/>
            <person name="Smith M."/>
            <person name="Steward C.A."/>
            <person name="Swarbreck D."/>
            <person name="Sycamore N."/>
            <person name="Tester J."/>
            <person name="Thorpe A."/>
            <person name="Tracey A."/>
            <person name="Tromans A."/>
            <person name="Thomas D.W."/>
            <person name="Wall M."/>
            <person name="Wallis J.M."/>
            <person name="West A.P."/>
            <person name="Whitehead S.L."/>
            <person name="Willey D.L."/>
            <person name="Williams S.A."/>
            <person name="Wilming L."/>
            <person name="Wray P.W."/>
            <person name="Young L."/>
            <person name="Ashurst J.L."/>
            <person name="Coulson A."/>
            <person name="Blocker H."/>
            <person name="Durbin R.M."/>
            <person name="Sulston J.E."/>
            <person name="Hubbard T."/>
            <person name="Jackson M.J."/>
            <person name="Bentley D.R."/>
            <person name="Beck S."/>
            <person name="Rogers J."/>
            <person name="Dunham I."/>
        </authorList>
    </citation>
    <scope>NUCLEOTIDE SEQUENCE [LARGE SCALE GENOMIC DNA]</scope>
</reference>
<reference key="4">
    <citation type="journal article" date="2016" name="Eur. J. Hum. Genet.">
        <title>Loss of function of the retinoid-related nuclear receptor (RORB) gene and epilepsy.</title>
        <authorList>
            <person name="Rudolf G."/>
            <person name="Lesca G."/>
            <person name="Mehrjouy M.M."/>
            <person name="Labalme A."/>
            <person name="Salmi M."/>
            <person name="Bache I."/>
            <person name="Bruneau N."/>
            <person name="Pendziwiat M."/>
            <person name="Fluss J."/>
            <person name="de Bellescize J."/>
            <person name="Scholly J."/>
            <person name="Moeller R.S."/>
            <person name="Craiu D."/>
            <person name="Tommerup N."/>
            <person name="Valenti-Hirsch M.P."/>
            <person name="Schluth-Bolard C."/>
            <person name="Sloan-Bena F."/>
            <person name="Helbig K.L."/>
            <person name="Weckhuysen S."/>
            <person name="Edery P."/>
            <person name="Coulbaut S."/>
            <person name="Abbas M."/>
            <person name="Scheffer I.E."/>
            <person name="Tang S."/>
            <person name="Myers C.T."/>
            <person name="Stamberger H."/>
            <person name="Carvill G.L."/>
            <person name="Shinde D.N."/>
            <person name="Mefford H.C."/>
            <person name="Neagu E."/>
            <person name="Huether R."/>
            <person name="Lu H.M."/>
            <person name="Dica A."/>
            <person name="Cohen J.S."/>
            <person name="Iliescu C."/>
            <person name="Pomeran C."/>
            <person name="Rubenstein J."/>
            <person name="Helbig I."/>
            <person name="Sanlaville D."/>
            <person name="Hirsch E."/>
            <person name="Szepetowski P."/>
        </authorList>
    </citation>
    <scope>INVOLVEMENT IN EIG15</scope>
    <scope>VARIANTS EIG15 77-ARG--LYS-470 DEL; PRO-84 AND LEU-428 DEL</scope>
    <scope>SUBCELLULAR LOCATION</scope>
    <scope>CHARACTERIZATION OF VARIANT 77-ARG--LYS-470 DEL</scope>
</reference>
<protein>
    <recommendedName>
        <fullName>Nuclear receptor ROR-beta</fullName>
    </recommendedName>
    <alternativeName>
        <fullName>Nuclear receptor RZR-beta</fullName>
    </alternativeName>
    <alternativeName>
        <fullName>Nuclear receptor subfamily 1 group F member 2</fullName>
    </alternativeName>
    <alternativeName>
        <fullName>Retinoid-related orphan receptor-beta</fullName>
    </alternativeName>
</protein>
<gene>
    <name type="primary">RORB</name>
    <name type="synonym">NR1F2</name>
    <name type="synonym">RZRB</name>
</gene>
<feature type="chain" id="PRO_0000053514" description="Nuclear receptor ROR-beta">
    <location>
        <begin position="1"/>
        <end position="470"/>
    </location>
</feature>
<feature type="domain" description="NR LBD" evidence="4">
    <location>
        <begin position="222"/>
        <end position="460"/>
    </location>
</feature>
<feature type="DNA-binding region" description="Nuclear receptor" evidence="3">
    <location>
        <begin position="18"/>
        <end position="93"/>
    </location>
</feature>
<feature type="zinc finger region" description="NR C4-type" evidence="3">
    <location>
        <begin position="21"/>
        <end position="41"/>
    </location>
</feature>
<feature type="zinc finger region" description="NR C4-type" evidence="3">
    <location>
        <begin position="57"/>
        <end position="81"/>
    </location>
</feature>
<feature type="region of interest" description="Disordered" evidence="5">
    <location>
        <begin position="104"/>
        <end position="127"/>
    </location>
</feature>
<feature type="short sequence motif" description="AF-2">
    <location>
        <begin position="456"/>
        <end position="461"/>
    </location>
</feature>
<feature type="compositionally biased region" description="Basic and acidic residues" evidence="5">
    <location>
        <begin position="104"/>
        <end position="117"/>
    </location>
</feature>
<feature type="splice variant" id="VSP_022575" description="In isoform 1." evidence="7">
    <original>MCENQLKTKADAT</original>
    <variation>MR</variation>
    <location>
        <begin position="1"/>
        <end position="13"/>
    </location>
</feature>
<feature type="sequence variant" id="VAR_082061" description="In EIG15; loss of subcellular location in the nucleoplasm." evidence="6">
    <location>
        <begin position="77"/>
        <end position="470"/>
    </location>
</feature>
<feature type="sequence variant" id="VAR_082062" description="In EIG15; dbSNP:rs869312971." evidence="6">
    <original>L</original>
    <variation>P</variation>
    <location>
        <position position="84"/>
    </location>
</feature>
<feature type="sequence variant" id="VAR_082063" description="In EIG15; uncertain significance; dbSNP:rs869312972." evidence="6">
    <location>
        <position position="428"/>
    </location>
</feature>
<feature type="sequence conflict" description="In Ref. 1; CAA69929." evidence="8" ref="1">
    <original>Q</original>
    <variation>E</variation>
    <location>
        <position position="121"/>
    </location>
</feature>
<feature type="sequence conflict" description="In Ref. 1; CAA69929." evidence="8" ref="1">
    <original>A</original>
    <variation>R</variation>
    <location>
        <position position="128"/>
    </location>
</feature>
<feature type="sequence conflict" description="In Ref. 1; CAA69929." evidence="8" ref="1">
    <original>H</original>
    <variation>S</variation>
    <location>
        <position position="156"/>
    </location>
</feature>
<feature type="sequence conflict" description="In Ref. 1; CAA69929." evidence="8" ref="1">
    <original>D</original>
    <variation>V</variation>
    <location>
        <position position="170"/>
    </location>
</feature>
<feature type="sequence conflict" description="In Ref. 1; CAA69929." evidence="8" ref="1">
    <original>G</original>
    <variation>A</variation>
    <location>
        <position position="468"/>
    </location>
</feature>
<proteinExistence type="evidence at protein level"/>
<organism>
    <name type="scientific">Homo sapiens</name>
    <name type="common">Human</name>
    <dbReference type="NCBI Taxonomy" id="9606"/>
    <lineage>
        <taxon>Eukaryota</taxon>
        <taxon>Metazoa</taxon>
        <taxon>Chordata</taxon>
        <taxon>Craniata</taxon>
        <taxon>Vertebrata</taxon>
        <taxon>Euteleostomi</taxon>
        <taxon>Mammalia</taxon>
        <taxon>Eutheria</taxon>
        <taxon>Euarchontoglires</taxon>
        <taxon>Primates</taxon>
        <taxon>Haplorrhini</taxon>
        <taxon>Catarrhini</taxon>
        <taxon>Hominidae</taxon>
        <taxon>Homo</taxon>
    </lineage>
</organism>
<comment type="function">
    <text evidence="1">Nuclear receptor that binds DNA as a monomer to ROR response elements (RORE) containing a single core motif half-site 5'-AGGTCA-3' preceded by a short A-T-rich sequence. Considered to have intrinsic transcriptional activity, have some natural ligands such as all-trans retinoic acid (ATRA) and other retinoids which act as inverse agonists repressing the transcriptional activity. Required for normal postnatal development of rod and cone photoreceptor cells. Modulates rod photoreceptors differentiation at least by inducing the transcription factor NRL-mediated pathway. In cone photoreceptor cells, regulates transcription of OPN1SW. Involved in the regulation of the period length and stability of the circadian rhythm. May control cytoarchitectural patterning of neocortical neurons during development. May act in a dose-dependent manner to regulate barrel formation upon innervation of layer IV neurons by thalamocortical axons. May play a role in the suppression of osteoblastic differentiation through the inhibition of RUNX2 transcriptional activity (By similarity).</text>
</comment>
<comment type="function">
    <text evidence="2">Isoform 1 is critical for hindlimb motor control and for the differentiation of amacrine and horizontal cells in the retina. Regulates the expression of PTF1A synergistically with FOXN4 (By similarity).</text>
</comment>
<comment type="subunit">
    <text evidence="1">Monomer. Interacts with CRX.</text>
</comment>
<comment type="interaction">
    <interactant intactId="EBI-6144615">
        <id>Q92753</id>
    </interactant>
    <interactant intactId="EBI-79859">
        <id>O08785</id>
        <label>Clock</label>
    </interactant>
    <organismsDiffer>true</organismsDiffer>
    <experiments>2</experiments>
</comment>
<comment type="interaction">
    <interactant intactId="EBI-18560266">
        <id>Q92753-1</id>
    </interactant>
    <interactant intactId="EBI-11954519">
        <id>Q49AR9</id>
        <label>ANKS1A</label>
    </interactant>
    <organismsDiffer>false</organismsDiffer>
    <experiments>3</experiments>
</comment>
<comment type="interaction">
    <interactant intactId="EBI-18560266">
        <id>Q92753-1</id>
    </interactant>
    <interactant intactId="EBI-739773">
        <id>Q9BSW2</id>
        <label>CRACR2A</label>
    </interactant>
    <organismsDiffer>false</organismsDiffer>
    <experiments>3</experiments>
</comment>
<comment type="interaction">
    <interactant intactId="EBI-18560266">
        <id>Q92753-1</id>
    </interactant>
    <interactant intactId="EBI-7960826">
        <id>Q8NHY3</id>
        <label>GAS2L2</label>
    </interactant>
    <organismsDiffer>false</organismsDiffer>
    <experiments>3</experiments>
</comment>
<comment type="interaction">
    <interactant intactId="EBI-18560266">
        <id>Q92753-1</id>
    </interactant>
    <interactant intactId="EBI-11993254">
        <id>Q9BYR2</id>
        <label>KRTAP4-5</label>
    </interactant>
    <organismsDiffer>false</organismsDiffer>
    <experiments>3</experiments>
</comment>
<comment type="interaction">
    <interactant intactId="EBI-18560266">
        <id>Q92753-1</id>
    </interactant>
    <interactant intactId="EBI-13287659">
        <id>P06239-3</id>
        <label>LCK</label>
    </interactant>
    <organismsDiffer>false</organismsDiffer>
    <experiments>3</experiments>
</comment>
<comment type="interaction">
    <interactant intactId="EBI-18560266">
        <id>Q92753-1</id>
    </interactant>
    <interactant intactId="EBI-10961483">
        <id>Q96JN0-2</id>
        <label>LCOR</label>
    </interactant>
    <organismsDiffer>false</organismsDiffer>
    <experiments>3</experiments>
</comment>
<comment type="interaction">
    <interactant intactId="EBI-18560266">
        <id>Q92753-1</id>
    </interactant>
    <interactant intactId="EBI-394558">
        <id>Q71SY5</id>
        <label>MED25</label>
    </interactant>
    <organismsDiffer>false</organismsDiffer>
    <experiments>3</experiments>
</comment>
<comment type="interaction">
    <interactant intactId="EBI-18560266">
        <id>Q92753-1</id>
    </interactant>
    <interactant intactId="EBI-10172526">
        <id>Q9UJV3-2</id>
        <label>MID2</label>
    </interactant>
    <organismsDiffer>false</organismsDiffer>
    <experiments>3</experiments>
</comment>
<comment type="interaction">
    <interactant intactId="EBI-18560266">
        <id>Q92753-1</id>
    </interactant>
    <interactant intactId="EBI-14083835">
        <id>O94964-4</id>
        <label>MTCL2</label>
    </interactant>
    <organismsDiffer>false</organismsDiffer>
    <experiments>3</experiments>
</comment>
<comment type="interaction">
    <interactant intactId="EBI-18560266">
        <id>Q92753-1</id>
    </interactant>
    <interactant intactId="EBI-357745">
        <id>P62195</id>
        <label>PSMC5</label>
    </interactant>
    <organismsDiffer>false</organismsDiffer>
    <experiments>3</experiments>
</comment>
<comment type="interaction">
    <interactant intactId="EBI-18560266">
        <id>Q92753-1</id>
    </interactant>
    <interactant intactId="EBI-748391">
        <id>Q9BWG6</id>
        <label>SCNM1</label>
    </interactant>
    <organismsDiffer>false</organismsDiffer>
    <experiments>3</experiments>
</comment>
<comment type="interaction">
    <interactant intactId="EBI-18560266">
        <id>Q92753-1</id>
    </interactant>
    <interactant intactId="EBI-358489">
        <id>Q96GM5</id>
        <label>SMARCD1</label>
    </interactant>
    <organismsDiffer>false</organismsDiffer>
    <experiments>3</experiments>
</comment>
<comment type="interaction">
    <interactant intactId="EBI-18560266">
        <id>Q92753-1</id>
    </interactant>
    <interactant intactId="EBI-10239812">
        <id>Q96M29</id>
        <label>TEKT5</label>
    </interactant>
    <organismsDiffer>false</organismsDiffer>
    <experiments>3</experiments>
</comment>
<comment type="interaction">
    <interactant intactId="EBI-18560266">
        <id>Q92753-1</id>
    </interactant>
    <interactant intactId="EBI-11741437">
        <id>Q08117-2</id>
        <label>TLE5</label>
    </interactant>
    <organismsDiffer>false</organismsDiffer>
    <experiments>3</experiments>
</comment>
<comment type="interaction">
    <interactant intactId="EBI-18560266">
        <id>Q92753-1</id>
    </interactant>
    <interactant intactId="EBI-10241197">
        <id>Q3SY00</id>
        <label>TSGA10IP</label>
    </interactant>
    <organismsDiffer>false</organismsDiffer>
    <experiments>3</experiments>
</comment>
<comment type="interaction">
    <interactant intactId="EBI-18560266">
        <id>Q92753-1</id>
    </interactant>
    <interactant intactId="EBI-740727">
        <id>Q8TAU3</id>
        <label>ZNF417</label>
    </interactant>
    <organismsDiffer>false</organismsDiffer>
    <experiments>3</experiments>
</comment>
<comment type="interaction">
    <interactant intactId="EBI-18560266">
        <id>Q92753-1</id>
    </interactant>
    <interactant intactId="EBI-6427977">
        <id>Q96SQ5</id>
        <label>ZNF587</label>
    </interactant>
    <organismsDiffer>false</organismsDiffer>
    <experiments>3</experiments>
</comment>
<comment type="subcellular location">
    <subcellularLocation>
        <location evidence="6">Nucleus</location>
        <location evidence="6">Nucleoplasm</location>
    </subcellularLocation>
</comment>
<comment type="alternative products">
    <event type="alternative promoter"/>
    <isoform>
        <id>Q92753-2</id>
        <name>2</name>
        <sequence type="displayed"/>
    </isoform>
    <isoform>
        <id>Q92753-1</id>
        <name>1</name>
        <sequence type="described" ref="VSP_022575"/>
    </isoform>
</comment>
<comment type="domain">
    <text evidence="1">AF-2 (activation function-2) motif is required for recruiting coregulators containing the LXXLL motif, such as NCOA1, and control the transactivational activity.</text>
</comment>
<comment type="disease" evidence="6">
    <disease id="DI-05509">
        <name>Epilepsy, idiopathic generalized 15</name>
        <acronym>EIG15</acronym>
        <description>An autosomal dominant form of idiopathic generalized epilepsy, a disorder characterized by recurring generalized seizures in the absence of detectable brain lesions and/or metabolic abnormalities. Generalized seizures arise diffusely and simultaneously from both hemispheres of the brain. Seizure types include juvenile myoclonic seizures, absence seizures, and generalized tonic-clonic seizures. EIG15 is characterized by onset of variable types of seizures in the first decade of life.</description>
        <dbReference type="MIM" id="618357"/>
    </disease>
    <text>Disease susceptibility is associated with variants affecting the gene represented in this entry.</text>
</comment>
<comment type="similarity">
    <text evidence="8">Belongs to the nuclear hormone receptor family. NR1 subfamily.</text>
</comment>
<accession>Q92753</accession>
<accession>Q8WX73</accession>
<keyword id="KW-0010">Activator</keyword>
<keyword id="KW-0877">Alternative promoter usage</keyword>
<keyword id="KW-0090">Biological rhythms</keyword>
<keyword id="KW-0217">Developmental protein</keyword>
<keyword id="KW-0225">Disease variant</keyword>
<keyword id="KW-0238">DNA-binding</keyword>
<keyword id="KW-0887">Epilepsy</keyword>
<keyword id="KW-0479">Metal-binding</keyword>
<keyword id="KW-0539">Nucleus</keyword>
<keyword id="KW-1267">Proteomics identification</keyword>
<keyword id="KW-0675">Receptor</keyword>
<keyword id="KW-1185">Reference proteome</keyword>
<keyword id="KW-0716">Sensory transduction</keyword>
<keyword id="KW-0804">Transcription</keyword>
<keyword id="KW-0805">Transcription regulation</keyword>
<keyword id="KW-0844">Vision</keyword>
<keyword id="KW-0862">Zinc</keyword>
<keyword id="KW-0863">Zinc-finger</keyword>
<name>RORB_HUMAN</name>